<accession>B1L0T7</accession>
<reference key="1">
    <citation type="journal article" date="2007" name="PLoS ONE">
        <title>Analysis of the neurotoxin complex genes in Clostridium botulinum A1-A4 and B1 strains: BoNT/A3, /Ba4 and /B1 clusters are located within plasmids.</title>
        <authorList>
            <person name="Smith T.J."/>
            <person name="Hill K.K."/>
            <person name="Foley B.T."/>
            <person name="Detter J.C."/>
            <person name="Munk A.C."/>
            <person name="Bruce D.C."/>
            <person name="Doggett N.A."/>
            <person name="Smith L.A."/>
            <person name="Marks J.D."/>
            <person name="Xie G."/>
            <person name="Brettin T.S."/>
        </authorList>
    </citation>
    <scope>NUCLEOTIDE SEQUENCE [LARGE SCALE GENOMIC DNA]</scope>
    <source>
        <strain>Loch Maree / Type A3</strain>
    </source>
</reference>
<protein>
    <recommendedName>
        <fullName evidence="1">Threonine--tRNA ligase</fullName>
        <ecNumber evidence="1">6.1.1.3</ecNumber>
    </recommendedName>
    <alternativeName>
        <fullName evidence="1">Threonyl-tRNA synthetase</fullName>
        <shortName evidence="1">ThrRS</shortName>
    </alternativeName>
</protein>
<gene>
    <name evidence="1" type="primary">thrS</name>
    <name type="ordered locus">CLK_2530</name>
</gene>
<sequence length="635" mass="73299">MIKITLKDGKVMEFEEGIKISDIAMKISPALYKKALAAKIDGETVDLMTELHKDSSLEILTFEDEMGKWALRHTGAHILAQAVKRLYPEVKLAIGPAIDTGFYYDFEADFTFTPEMLEKIEAEIKKIIKENHKLERFELPREEAIDLMKEKNEDYKVELIEDLPEGEVISFYKQGDFTDLCAGPHVPSTGKVKSVKLLSLAGAYWRGDENNKMLQRIYGTAFTKKSELDEYLNMLEEAKKRDHRKLGKELDLFSIHEEGPGFPFFHPKGMIIRNILESFWREEHTKAGYQEIRTPLILNEALWHQSGHWDHYKENMYFTNIDDGDYAIKPMNCPGGILVYKNSMHSYRDLPLRLSELGIVHRHELSGALHGLMRVRCFTQDDAHLYMTKEQIKEEIVGIIKLIDKFYKLFGFEYFVELSTRPEDSMGSDEDWEIATNGLREALDSIGKEYRVNEGDGAFYGPKIDFHLKDCIGRTWQCGTIQLDFQMPERFDLSYIGADGEKHRPVMVHRTIYGSVERFIGILIEQYAGAFPTWLAPVQVKLMNITDAQYDYLKKVEEALKENNIRVEIDTRNEKIGYKIREAQLQKIPYMLILGDKEVEAGKVAVRSRKDGDLGAISLEEFIEKIKNEIKVKTN</sequence>
<evidence type="ECO:0000255" key="1">
    <source>
        <dbReference type="HAMAP-Rule" id="MF_00184"/>
    </source>
</evidence>
<evidence type="ECO:0000255" key="2">
    <source>
        <dbReference type="PROSITE-ProRule" id="PRU01228"/>
    </source>
</evidence>
<proteinExistence type="inferred from homology"/>
<dbReference type="EC" id="6.1.1.3" evidence="1"/>
<dbReference type="EMBL" id="CP000962">
    <property type="protein sequence ID" value="ACA55204.1"/>
    <property type="molecule type" value="Genomic_DNA"/>
</dbReference>
<dbReference type="RefSeq" id="WP_012343217.1">
    <property type="nucleotide sequence ID" value="NC_010520.1"/>
</dbReference>
<dbReference type="SMR" id="B1L0T7"/>
<dbReference type="KEGG" id="cbl:CLK_2530"/>
<dbReference type="HOGENOM" id="CLU_008554_0_1_9"/>
<dbReference type="GO" id="GO:0005737">
    <property type="term" value="C:cytoplasm"/>
    <property type="evidence" value="ECO:0007669"/>
    <property type="project" value="UniProtKB-SubCell"/>
</dbReference>
<dbReference type="GO" id="GO:0005524">
    <property type="term" value="F:ATP binding"/>
    <property type="evidence" value="ECO:0007669"/>
    <property type="project" value="UniProtKB-UniRule"/>
</dbReference>
<dbReference type="GO" id="GO:0140096">
    <property type="term" value="F:catalytic activity, acting on a protein"/>
    <property type="evidence" value="ECO:0007669"/>
    <property type="project" value="UniProtKB-ARBA"/>
</dbReference>
<dbReference type="GO" id="GO:0046872">
    <property type="term" value="F:metal ion binding"/>
    <property type="evidence" value="ECO:0007669"/>
    <property type="project" value="UniProtKB-KW"/>
</dbReference>
<dbReference type="GO" id="GO:0004829">
    <property type="term" value="F:threonine-tRNA ligase activity"/>
    <property type="evidence" value="ECO:0007669"/>
    <property type="project" value="UniProtKB-UniRule"/>
</dbReference>
<dbReference type="GO" id="GO:0016740">
    <property type="term" value="F:transferase activity"/>
    <property type="evidence" value="ECO:0007669"/>
    <property type="project" value="UniProtKB-ARBA"/>
</dbReference>
<dbReference type="GO" id="GO:0000049">
    <property type="term" value="F:tRNA binding"/>
    <property type="evidence" value="ECO:0007669"/>
    <property type="project" value="UniProtKB-KW"/>
</dbReference>
<dbReference type="GO" id="GO:0006435">
    <property type="term" value="P:threonyl-tRNA aminoacylation"/>
    <property type="evidence" value="ECO:0007669"/>
    <property type="project" value="UniProtKB-UniRule"/>
</dbReference>
<dbReference type="CDD" id="cd01667">
    <property type="entry name" value="TGS_ThrRS"/>
    <property type="match status" value="1"/>
</dbReference>
<dbReference type="CDD" id="cd00860">
    <property type="entry name" value="ThrRS_anticodon"/>
    <property type="match status" value="1"/>
</dbReference>
<dbReference type="CDD" id="cd00771">
    <property type="entry name" value="ThrRS_core"/>
    <property type="match status" value="1"/>
</dbReference>
<dbReference type="FunFam" id="3.10.20.30:FF:000005">
    <property type="entry name" value="Threonine--tRNA ligase"/>
    <property type="match status" value="1"/>
</dbReference>
<dbReference type="FunFam" id="3.30.54.20:FF:000002">
    <property type="entry name" value="Threonine--tRNA ligase"/>
    <property type="match status" value="1"/>
</dbReference>
<dbReference type="FunFam" id="3.30.930.10:FF:000002">
    <property type="entry name" value="Threonine--tRNA ligase"/>
    <property type="match status" value="1"/>
</dbReference>
<dbReference type="FunFam" id="3.40.50.800:FF:000001">
    <property type="entry name" value="Threonine--tRNA ligase"/>
    <property type="match status" value="1"/>
</dbReference>
<dbReference type="FunFam" id="3.30.980.10:FF:000005">
    <property type="entry name" value="Threonyl-tRNA synthetase, mitochondrial"/>
    <property type="match status" value="1"/>
</dbReference>
<dbReference type="Gene3D" id="3.10.20.30">
    <property type="match status" value="1"/>
</dbReference>
<dbReference type="Gene3D" id="3.30.54.20">
    <property type="match status" value="1"/>
</dbReference>
<dbReference type="Gene3D" id="3.40.50.800">
    <property type="entry name" value="Anticodon-binding domain"/>
    <property type="match status" value="1"/>
</dbReference>
<dbReference type="Gene3D" id="3.30.930.10">
    <property type="entry name" value="Bira Bifunctional Protein, Domain 2"/>
    <property type="match status" value="1"/>
</dbReference>
<dbReference type="Gene3D" id="3.30.980.10">
    <property type="entry name" value="Threonyl-trna Synthetase, Chain A, domain 2"/>
    <property type="match status" value="1"/>
</dbReference>
<dbReference type="HAMAP" id="MF_00184">
    <property type="entry name" value="Thr_tRNA_synth"/>
    <property type="match status" value="1"/>
</dbReference>
<dbReference type="InterPro" id="IPR002314">
    <property type="entry name" value="aa-tRNA-synt_IIb"/>
</dbReference>
<dbReference type="InterPro" id="IPR006195">
    <property type="entry name" value="aa-tRNA-synth_II"/>
</dbReference>
<dbReference type="InterPro" id="IPR045864">
    <property type="entry name" value="aa-tRNA-synth_II/BPL/LPL"/>
</dbReference>
<dbReference type="InterPro" id="IPR004154">
    <property type="entry name" value="Anticodon-bd"/>
</dbReference>
<dbReference type="InterPro" id="IPR036621">
    <property type="entry name" value="Anticodon-bd_dom_sf"/>
</dbReference>
<dbReference type="InterPro" id="IPR012675">
    <property type="entry name" value="Beta-grasp_dom_sf"/>
</dbReference>
<dbReference type="InterPro" id="IPR004095">
    <property type="entry name" value="TGS"/>
</dbReference>
<dbReference type="InterPro" id="IPR012676">
    <property type="entry name" value="TGS-like"/>
</dbReference>
<dbReference type="InterPro" id="IPR002320">
    <property type="entry name" value="Thr-tRNA-ligase_IIa"/>
</dbReference>
<dbReference type="InterPro" id="IPR018163">
    <property type="entry name" value="Thr/Ala-tRNA-synth_IIc_edit"/>
</dbReference>
<dbReference type="InterPro" id="IPR047246">
    <property type="entry name" value="ThrRS_anticodon"/>
</dbReference>
<dbReference type="InterPro" id="IPR033728">
    <property type="entry name" value="ThrRS_core"/>
</dbReference>
<dbReference type="InterPro" id="IPR012947">
    <property type="entry name" value="tRNA_SAD"/>
</dbReference>
<dbReference type="NCBIfam" id="TIGR00418">
    <property type="entry name" value="thrS"/>
    <property type="match status" value="1"/>
</dbReference>
<dbReference type="PANTHER" id="PTHR11451:SF44">
    <property type="entry name" value="THREONINE--TRNA LIGASE, CHLOROPLASTIC_MITOCHONDRIAL 2"/>
    <property type="match status" value="1"/>
</dbReference>
<dbReference type="PANTHER" id="PTHR11451">
    <property type="entry name" value="THREONINE-TRNA LIGASE"/>
    <property type="match status" value="1"/>
</dbReference>
<dbReference type="Pfam" id="PF03129">
    <property type="entry name" value="HGTP_anticodon"/>
    <property type="match status" value="1"/>
</dbReference>
<dbReference type="Pfam" id="PF02824">
    <property type="entry name" value="TGS"/>
    <property type="match status" value="1"/>
</dbReference>
<dbReference type="Pfam" id="PF00587">
    <property type="entry name" value="tRNA-synt_2b"/>
    <property type="match status" value="1"/>
</dbReference>
<dbReference type="Pfam" id="PF07973">
    <property type="entry name" value="tRNA_SAD"/>
    <property type="match status" value="1"/>
</dbReference>
<dbReference type="PRINTS" id="PR01047">
    <property type="entry name" value="TRNASYNTHTHR"/>
</dbReference>
<dbReference type="SMART" id="SM00863">
    <property type="entry name" value="tRNA_SAD"/>
    <property type="match status" value="1"/>
</dbReference>
<dbReference type="SUPFAM" id="SSF52954">
    <property type="entry name" value="Class II aaRS ABD-related"/>
    <property type="match status" value="1"/>
</dbReference>
<dbReference type="SUPFAM" id="SSF55681">
    <property type="entry name" value="Class II aaRS and biotin synthetases"/>
    <property type="match status" value="1"/>
</dbReference>
<dbReference type="SUPFAM" id="SSF81271">
    <property type="entry name" value="TGS-like"/>
    <property type="match status" value="1"/>
</dbReference>
<dbReference type="SUPFAM" id="SSF55186">
    <property type="entry name" value="ThrRS/AlaRS common domain"/>
    <property type="match status" value="1"/>
</dbReference>
<dbReference type="PROSITE" id="PS50862">
    <property type="entry name" value="AA_TRNA_LIGASE_II"/>
    <property type="match status" value="1"/>
</dbReference>
<dbReference type="PROSITE" id="PS51880">
    <property type="entry name" value="TGS"/>
    <property type="match status" value="1"/>
</dbReference>
<comment type="function">
    <text evidence="1">Catalyzes the attachment of threonine to tRNA(Thr) in a two-step reaction: L-threonine is first activated by ATP to form Thr-AMP and then transferred to the acceptor end of tRNA(Thr). Also edits incorrectly charged L-seryl-tRNA(Thr).</text>
</comment>
<comment type="catalytic activity">
    <reaction evidence="1">
        <text>tRNA(Thr) + L-threonine + ATP = L-threonyl-tRNA(Thr) + AMP + diphosphate + H(+)</text>
        <dbReference type="Rhea" id="RHEA:24624"/>
        <dbReference type="Rhea" id="RHEA-COMP:9670"/>
        <dbReference type="Rhea" id="RHEA-COMP:9704"/>
        <dbReference type="ChEBI" id="CHEBI:15378"/>
        <dbReference type="ChEBI" id="CHEBI:30616"/>
        <dbReference type="ChEBI" id="CHEBI:33019"/>
        <dbReference type="ChEBI" id="CHEBI:57926"/>
        <dbReference type="ChEBI" id="CHEBI:78442"/>
        <dbReference type="ChEBI" id="CHEBI:78534"/>
        <dbReference type="ChEBI" id="CHEBI:456215"/>
        <dbReference type="EC" id="6.1.1.3"/>
    </reaction>
</comment>
<comment type="cofactor">
    <cofactor evidence="1">
        <name>Zn(2+)</name>
        <dbReference type="ChEBI" id="CHEBI:29105"/>
    </cofactor>
    <text evidence="1">Binds 1 zinc ion per subunit.</text>
</comment>
<comment type="subunit">
    <text evidence="1">Homodimer.</text>
</comment>
<comment type="subcellular location">
    <subcellularLocation>
        <location evidence="1">Cytoplasm</location>
    </subcellularLocation>
</comment>
<comment type="similarity">
    <text evidence="1">Belongs to the class-II aminoacyl-tRNA synthetase family.</text>
</comment>
<organism>
    <name type="scientific">Clostridium botulinum (strain Loch Maree / Type A3)</name>
    <dbReference type="NCBI Taxonomy" id="498214"/>
    <lineage>
        <taxon>Bacteria</taxon>
        <taxon>Bacillati</taxon>
        <taxon>Bacillota</taxon>
        <taxon>Clostridia</taxon>
        <taxon>Eubacteriales</taxon>
        <taxon>Clostridiaceae</taxon>
        <taxon>Clostridium</taxon>
    </lineage>
</organism>
<keyword id="KW-0030">Aminoacyl-tRNA synthetase</keyword>
<keyword id="KW-0067">ATP-binding</keyword>
<keyword id="KW-0963">Cytoplasm</keyword>
<keyword id="KW-0436">Ligase</keyword>
<keyword id="KW-0479">Metal-binding</keyword>
<keyword id="KW-0547">Nucleotide-binding</keyword>
<keyword id="KW-0648">Protein biosynthesis</keyword>
<keyword id="KW-0694">RNA-binding</keyword>
<keyword id="KW-0820">tRNA-binding</keyword>
<keyword id="KW-0862">Zinc</keyword>
<name>SYT_CLOBM</name>
<feature type="chain" id="PRO_1000098563" description="Threonine--tRNA ligase">
    <location>
        <begin position="1"/>
        <end position="635"/>
    </location>
</feature>
<feature type="domain" description="TGS" evidence="2">
    <location>
        <begin position="1"/>
        <end position="61"/>
    </location>
</feature>
<feature type="region of interest" description="Catalytic" evidence="1">
    <location>
        <begin position="242"/>
        <end position="532"/>
    </location>
</feature>
<feature type="binding site" evidence="1">
    <location>
        <position position="333"/>
    </location>
    <ligand>
        <name>Zn(2+)</name>
        <dbReference type="ChEBI" id="CHEBI:29105"/>
    </ligand>
</feature>
<feature type="binding site" evidence="1">
    <location>
        <position position="384"/>
    </location>
    <ligand>
        <name>Zn(2+)</name>
        <dbReference type="ChEBI" id="CHEBI:29105"/>
    </ligand>
</feature>
<feature type="binding site" evidence="1">
    <location>
        <position position="509"/>
    </location>
    <ligand>
        <name>Zn(2+)</name>
        <dbReference type="ChEBI" id="CHEBI:29105"/>
    </ligand>
</feature>